<protein>
    <recommendedName>
        <fullName evidence="1">LexA repressor</fullName>
        <ecNumber evidence="1">3.4.21.88</ecNumber>
    </recommendedName>
</protein>
<sequence length="206" mass="22731">MRPLTPRQAEILELIKRNIADTGMPPTRAEIATRLGFKSANAAEEHLKALAKKGCIEIMPGTSRGIRLPAEEEVVVEYGLPLIGQVAAGEPILAQEHVEQYYQVDPSMFHPTADFLLRVKGDSMKNIGILEGDLLAVHKVQQARNGQVVVARVDDDVTVKRFEKKGNLVYLYAENEDYSPIKVDLSCQSLTIEGLAVGVIRNGDWL</sequence>
<comment type="function">
    <text evidence="1">Represses a number of genes involved in the response to DNA damage (SOS response), including recA and lexA. In the presence of single-stranded DNA, RecA interacts with LexA causing an autocatalytic cleavage which disrupts the DNA-binding part of LexA, leading to derepression of the SOS regulon and eventually DNA repair.</text>
</comment>
<comment type="catalytic activity">
    <reaction evidence="1">
        <text>Hydrolysis of Ala-|-Gly bond in repressor LexA.</text>
        <dbReference type="EC" id="3.4.21.88"/>
    </reaction>
</comment>
<comment type="subunit">
    <text evidence="1">Homodimer.</text>
</comment>
<comment type="similarity">
    <text evidence="1">Belongs to the peptidase S24 family.</text>
</comment>
<accession>A4YC04</accession>
<dbReference type="EC" id="3.4.21.88" evidence="1"/>
<dbReference type="EMBL" id="CP000681">
    <property type="protein sequence ID" value="ABP77487.1"/>
    <property type="molecule type" value="Genomic_DNA"/>
</dbReference>
<dbReference type="SMR" id="A4YC04"/>
<dbReference type="STRING" id="319224.Sputcn32_3780"/>
<dbReference type="MEROPS" id="S24.001"/>
<dbReference type="KEGG" id="spc:Sputcn32_3780"/>
<dbReference type="eggNOG" id="COG1974">
    <property type="taxonomic scope" value="Bacteria"/>
</dbReference>
<dbReference type="HOGENOM" id="CLU_066192_45_3_6"/>
<dbReference type="GO" id="GO:0003677">
    <property type="term" value="F:DNA binding"/>
    <property type="evidence" value="ECO:0007669"/>
    <property type="project" value="UniProtKB-UniRule"/>
</dbReference>
<dbReference type="GO" id="GO:0004252">
    <property type="term" value="F:serine-type endopeptidase activity"/>
    <property type="evidence" value="ECO:0007669"/>
    <property type="project" value="UniProtKB-UniRule"/>
</dbReference>
<dbReference type="GO" id="GO:0006281">
    <property type="term" value="P:DNA repair"/>
    <property type="evidence" value="ECO:0007669"/>
    <property type="project" value="UniProtKB-UniRule"/>
</dbReference>
<dbReference type="GO" id="GO:0006260">
    <property type="term" value="P:DNA replication"/>
    <property type="evidence" value="ECO:0007669"/>
    <property type="project" value="UniProtKB-UniRule"/>
</dbReference>
<dbReference type="GO" id="GO:0045892">
    <property type="term" value="P:negative regulation of DNA-templated transcription"/>
    <property type="evidence" value="ECO:0007669"/>
    <property type="project" value="UniProtKB-UniRule"/>
</dbReference>
<dbReference type="GO" id="GO:0006508">
    <property type="term" value="P:proteolysis"/>
    <property type="evidence" value="ECO:0007669"/>
    <property type="project" value="InterPro"/>
</dbReference>
<dbReference type="GO" id="GO:0009432">
    <property type="term" value="P:SOS response"/>
    <property type="evidence" value="ECO:0007669"/>
    <property type="project" value="UniProtKB-UniRule"/>
</dbReference>
<dbReference type="CDD" id="cd06529">
    <property type="entry name" value="S24_LexA-like"/>
    <property type="match status" value="1"/>
</dbReference>
<dbReference type="FunFam" id="1.10.10.10:FF:000009">
    <property type="entry name" value="LexA repressor"/>
    <property type="match status" value="1"/>
</dbReference>
<dbReference type="FunFam" id="2.10.109.10:FF:000001">
    <property type="entry name" value="LexA repressor"/>
    <property type="match status" value="1"/>
</dbReference>
<dbReference type="Gene3D" id="2.10.109.10">
    <property type="entry name" value="Umud Fragment, subunit A"/>
    <property type="match status" value="1"/>
</dbReference>
<dbReference type="Gene3D" id="1.10.10.10">
    <property type="entry name" value="Winged helix-like DNA-binding domain superfamily/Winged helix DNA-binding domain"/>
    <property type="match status" value="1"/>
</dbReference>
<dbReference type="HAMAP" id="MF_00015">
    <property type="entry name" value="LexA"/>
    <property type="match status" value="1"/>
</dbReference>
<dbReference type="InterPro" id="IPR006200">
    <property type="entry name" value="LexA"/>
</dbReference>
<dbReference type="InterPro" id="IPR039418">
    <property type="entry name" value="LexA-like"/>
</dbReference>
<dbReference type="InterPro" id="IPR036286">
    <property type="entry name" value="LexA/Signal_pep-like_sf"/>
</dbReference>
<dbReference type="InterPro" id="IPR006199">
    <property type="entry name" value="LexA_DNA-bd_dom"/>
</dbReference>
<dbReference type="InterPro" id="IPR050077">
    <property type="entry name" value="LexA_repressor"/>
</dbReference>
<dbReference type="InterPro" id="IPR006197">
    <property type="entry name" value="Peptidase_S24_LexA"/>
</dbReference>
<dbReference type="InterPro" id="IPR015927">
    <property type="entry name" value="Peptidase_S24_S26A/B/C"/>
</dbReference>
<dbReference type="InterPro" id="IPR036388">
    <property type="entry name" value="WH-like_DNA-bd_sf"/>
</dbReference>
<dbReference type="InterPro" id="IPR036390">
    <property type="entry name" value="WH_DNA-bd_sf"/>
</dbReference>
<dbReference type="NCBIfam" id="TIGR00498">
    <property type="entry name" value="lexA"/>
    <property type="match status" value="1"/>
</dbReference>
<dbReference type="PANTHER" id="PTHR33516">
    <property type="entry name" value="LEXA REPRESSOR"/>
    <property type="match status" value="1"/>
</dbReference>
<dbReference type="PANTHER" id="PTHR33516:SF2">
    <property type="entry name" value="LEXA REPRESSOR-RELATED"/>
    <property type="match status" value="1"/>
</dbReference>
<dbReference type="Pfam" id="PF01726">
    <property type="entry name" value="LexA_DNA_bind"/>
    <property type="match status" value="1"/>
</dbReference>
<dbReference type="Pfam" id="PF00717">
    <property type="entry name" value="Peptidase_S24"/>
    <property type="match status" value="1"/>
</dbReference>
<dbReference type="PRINTS" id="PR00726">
    <property type="entry name" value="LEXASERPTASE"/>
</dbReference>
<dbReference type="SUPFAM" id="SSF51306">
    <property type="entry name" value="LexA/Signal peptidase"/>
    <property type="match status" value="1"/>
</dbReference>
<dbReference type="SUPFAM" id="SSF46785">
    <property type="entry name" value="Winged helix' DNA-binding domain"/>
    <property type="match status" value="1"/>
</dbReference>
<organism>
    <name type="scientific">Shewanella putrefaciens (strain CN-32 / ATCC BAA-453)</name>
    <dbReference type="NCBI Taxonomy" id="319224"/>
    <lineage>
        <taxon>Bacteria</taxon>
        <taxon>Pseudomonadati</taxon>
        <taxon>Pseudomonadota</taxon>
        <taxon>Gammaproteobacteria</taxon>
        <taxon>Alteromonadales</taxon>
        <taxon>Shewanellaceae</taxon>
        <taxon>Shewanella</taxon>
    </lineage>
</organism>
<proteinExistence type="inferred from homology"/>
<evidence type="ECO:0000255" key="1">
    <source>
        <dbReference type="HAMAP-Rule" id="MF_00015"/>
    </source>
</evidence>
<reference key="1">
    <citation type="submission" date="2007-04" db="EMBL/GenBank/DDBJ databases">
        <title>Complete sequence of Shewanella putrefaciens CN-32.</title>
        <authorList>
            <consortium name="US DOE Joint Genome Institute"/>
            <person name="Copeland A."/>
            <person name="Lucas S."/>
            <person name="Lapidus A."/>
            <person name="Barry K."/>
            <person name="Detter J.C."/>
            <person name="Glavina del Rio T."/>
            <person name="Hammon N."/>
            <person name="Israni S."/>
            <person name="Dalin E."/>
            <person name="Tice H."/>
            <person name="Pitluck S."/>
            <person name="Chain P."/>
            <person name="Malfatti S."/>
            <person name="Shin M."/>
            <person name="Vergez L."/>
            <person name="Schmutz J."/>
            <person name="Larimer F."/>
            <person name="Land M."/>
            <person name="Hauser L."/>
            <person name="Kyrpides N."/>
            <person name="Mikhailova N."/>
            <person name="Romine M.F."/>
            <person name="Fredrickson J."/>
            <person name="Tiedje J."/>
            <person name="Richardson P."/>
        </authorList>
    </citation>
    <scope>NUCLEOTIDE SEQUENCE [LARGE SCALE GENOMIC DNA]</scope>
    <source>
        <strain>CN-32 / ATCC BAA-453</strain>
    </source>
</reference>
<feature type="chain" id="PRO_1000001338" description="LexA repressor">
    <location>
        <begin position="1"/>
        <end position="206"/>
    </location>
</feature>
<feature type="DNA-binding region" description="H-T-H motif" evidence="1">
    <location>
        <begin position="28"/>
        <end position="48"/>
    </location>
</feature>
<feature type="active site" description="For autocatalytic cleavage activity" evidence="1">
    <location>
        <position position="123"/>
    </location>
</feature>
<feature type="active site" description="For autocatalytic cleavage activity" evidence="1">
    <location>
        <position position="160"/>
    </location>
</feature>
<feature type="site" description="Cleavage; by autolysis" evidence="1">
    <location>
        <begin position="88"/>
        <end position="89"/>
    </location>
</feature>
<gene>
    <name evidence="1" type="primary">lexA</name>
    <name type="ordered locus">Sputcn32_3780</name>
</gene>
<keyword id="KW-0068">Autocatalytic cleavage</keyword>
<keyword id="KW-0227">DNA damage</keyword>
<keyword id="KW-0234">DNA repair</keyword>
<keyword id="KW-0235">DNA replication</keyword>
<keyword id="KW-0238">DNA-binding</keyword>
<keyword id="KW-0378">Hydrolase</keyword>
<keyword id="KW-0678">Repressor</keyword>
<keyword id="KW-0742">SOS response</keyword>
<keyword id="KW-0804">Transcription</keyword>
<keyword id="KW-0805">Transcription regulation</keyword>
<name>LEXA_SHEPC</name>